<dbReference type="EMBL" id="AY219921">
    <property type="protein sequence ID" value="AAR02858.1"/>
    <property type="molecule type" value="Genomic_DNA"/>
</dbReference>
<dbReference type="EMBL" id="AACD01000105">
    <property type="protein sequence ID" value="EAA57981.1"/>
    <property type="molecule type" value="Genomic_DNA"/>
</dbReference>
<dbReference type="EMBL" id="BN001301">
    <property type="protein sequence ID" value="CBF69992.1"/>
    <property type="molecule type" value="Genomic_DNA"/>
</dbReference>
<dbReference type="PIR" id="A41694">
    <property type="entry name" value="A41694"/>
</dbReference>
<dbReference type="RefSeq" id="XP_663799.1">
    <property type="nucleotide sequence ID" value="XM_658707.2"/>
</dbReference>
<dbReference type="SMR" id="Q01981"/>
<dbReference type="STRING" id="227321.Q01981"/>
<dbReference type="EnsemblFungi" id="CBF69992">
    <property type="protein sequence ID" value="CBF69992"/>
    <property type="gene ID" value="ANIA_06195"/>
</dbReference>
<dbReference type="GeneID" id="2870784"/>
<dbReference type="KEGG" id="ani:ANIA_06195"/>
<dbReference type="VEuPathDB" id="FungiDB:AN6195"/>
<dbReference type="eggNOG" id="KOG1721">
    <property type="taxonomic scope" value="Eukaryota"/>
</dbReference>
<dbReference type="HOGENOM" id="CLU_036230_0_0_1"/>
<dbReference type="InParanoid" id="Q01981"/>
<dbReference type="OMA" id="YHMARSH"/>
<dbReference type="OrthoDB" id="654211at2759"/>
<dbReference type="Proteomes" id="UP000000560">
    <property type="component" value="Chromosome I"/>
</dbReference>
<dbReference type="GO" id="GO:0005737">
    <property type="term" value="C:cytoplasm"/>
    <property type="evidence" value="ECO:0000314"/>
    <property type="project" value="AspGD"/>
</dbReference>
<dbReference type="GO" id="GO:0005634">
    <property type="term" value="C:nucleus"/>
    <property type="evidence" value="ECO:0000314"/>
    <property type="project" value="AspGD"/>
</dbReference>
<dbReference type="GO" id="GO:0000978">
    <property type="term" value="F:RNA polymerase II cis-regulatory region sequence-specific DNA binding"/>
    <property type="evidence" value="ECO:0000318"/>
    <property type="project" value="GO_Central"/>
</dbReference>
<dbReference type="GO" id="GO:0008270">
    <property type="term" value="F:zinc ion binding"/>
    <property type="evidence" value="ECO:0007669"/>
    <property type="project" value="UniProtKB-KW"/>
</dbReference>
<dbReference type="GO" id="GO:0006338">
    <property type="term" value="P:chromatin remodeling"/>
    <property type="evidence" value="ECO:0000315"/>
    <property type="project" value="AspGD"/>
</dbReference>
<dbReference type="GO" id="GO:0045892">
    <property type="term" value="P:negative regulation of DNA-templated transcription"/>
    <property type="evidence" value="ECO:0000315"/>
    <property type="project" value="UniProtKB"/>
</dbReference>
<dbReference type="GO" id="GO:0009051">
    <property type="term" value="P:pentose-phosphate shunt, oxidative branch"/>
    <property type="evidence" value="ECO:0000315"/>
    <property type="project" value="AspGD"/>
</dbReference>
<dbReference type="GO" id="GO:0043609">
    <property type="term" value="P:regulation of carbon utilization"/>
    <property type="evidence" value="ECO:0000315"/>
    <property type="project" value="AspGD"/>
</dbReference>
<dbReference type="FunFam" id="3.30.160.60:FF:000089">
    <property type="entry name" value="DNA-binding protein creA"/>
    <property type="match status" value="1"/>
</dbReference>
<dbReference type="FunFam" id="3.30.160.60:FF:000152">
    <property type="entry name" value="DNA-binding protein creA"/>
    <property type="match status" value="1"/>
</dbReference>
<dbReference type="Gene3D" id="3.30.160.60">
    <property type="entry name" value="Classic Zinc Finger"/>
    <property type="match status" value="2"/>
</dbReference>
<dbReference type="InterPro" id="IPR051007">
    <property type="entry name" value="creA/MIG_C2H2-ZnF"/>
</dbReference>
<dbReference type="InterPro" id="IPR036236">
    <property type="entry name" value="Znf_C2H2_sf"/>
</dbReference>
<dbReference type="InterPro" id="IPR013087">
    <property type="entry name" value="Znf_C2H2_type"/>
</dbReference>
<dbReference type="PANTHER" id="PTHR47428">
    <property type="entry name" value="REGULATORY PROTEIN MIG1-RELATED"/>
    <property type="match status" value="1"/>
</dbReference>
<dbReference type="PANTHER" id="PTHR47428:SF1">
    <property type="entry name" value="REGULATORY PROTEIN MIG1-RELATED"/>
    <property type="match status" value="1"/>
</dbReference>
<dbReference type="Pfam" id="PF00096">
    <property type="entry name" value="zf-C2H2"/>
    <property type="match status" value="2"/>
</dbReference>
<dbReference type="SMART" id="SM00355">
    <property type="entry name" value="ZnF_C2H2"/>
    <property type="match status" value="2"/>
</dbReference>
<dbReference type="SUPFAM" id="SSF57667">
    <property type="entry name" value="beta-beta-alpha zinc fingers"/>
    <property type="match status" value="1"/>
</dbReference>
<dbReference type="PROSITE" id="PS00028">
    <property type="entry name" value="ZINC_FINGER_C2H2_1"/>
    <property type="match status" value="2"/>
</dbReference>
<dbReference type="PROSITE" id="PS50157">
    <property type="entry name" value="ZINC_FINGER_C2H2_2"/>
    <property type="match status" value="2"/>
</dbReference>
<organism>
    <name type="scientific">Emericella nidulans (strain FGSC A4 / ATCC 38163 / CBS 112.46 / NRRL 194 / M139)</name>
    <name type="common">Aspergillus nidulans</name>
    <dbReference type="NCBI Taxonomy" id="227321"/>
    <lineage>
        <taxon>Eukaryota</taxon>
        <taxon>Fungi</taxon>
        <taxon>Dikarya</taxon>
        <taxon>Ascomycota</taxon>
        <taxon>Pezizomycotina</taxon>
        <taxon>Eurotiomycetes</taxon>
        <taxon>Eurotiomycetidae</taxon>
        <taxon>Eurotiales</taxon>
        <taxon>Aspergillaceae</taxon>
        <taxon>Aspergillus</taxon>
        <taxon>Aspergillus subgen. Nidulantes</taxon>
    </lineage>
</organism>
<comment type="function">
    <text evidence="4 5 6">Transcription regulator component of the regulatory network controlling carbon source utilization through ubiquitination and deubiquitination involving creA, creB, creC, creD and acrB. Represses the transcription of the alcR, alcA and aldA genes by binding to a GC-rich region in their promoter. Also plays a role in response to carbon starvation and the control of extracellular proteases activity.</text>
</comment>
<comment type="subunit">
    <text evidence="8">Interacts with creB.</text>
</comment>
<comment type="subcellular location">
    <subcellularLocation>
        <location evidence="5">Nucleus</location>
    </subcellularLocation>
</comment>
<comment type="induction">
    <text evidence="7">Induced during growth on suberin.</text>
</comment>
<comment type="PTM">
    <text evidence="1">Ubiquitinated. Deubiquitinated by creB, probably to control its activity or amount (By similarity).</text>
</comment>
<comment type="similarity">
    <text evidence="9">Belongs to the creA/MIG C2H2-type zinc-finger protein family.</text>
</comment>
<protein>
    <recommendedName>
        <fullName>DNA-binding protein creA</fullName>
    </recommendedName>
    <alternativeName>
        <fullName>Carbon catabolite repressor A</fullName>
    </alternativeName>
</protein>
<reference key="1">
    <citation type="journal article" date="1991" name="Mol. Cell. Biol.">
        <title>Analysis of the creA gene, a regulator of carbon catabolite repression in Aspergillus nidulans.</title>
        <authorList>
            <person name="Dowzer C.E.A."/>
            <person name="Kelly J.M."/>
        </authorList>
    </citation>
    <scope>NUCLEOTIDE SEQUENCE [GENOMIC DNA]</scope>
</reference>
<reference key="2">
    <citation type="journal article" date="2005" name="Nature">
        <title>Sequencing of Aspergillus nidulans and comparative analysis with A. fumigatus and A. oryzae.</title>
        <authorList>
            <person name="Galagan J.E."/>
            <person name="Calvo S.E."/>
            <person name="Cuomo C."/>
            <person name="Ma L.-J."/>
            <person name="Wortman J.R."/>
            <person name="Batzoglou S."/>
            <person name="Lee S.-I."/>
            <person name="Bastuerkmen M."/>
            <person name="Spevak C.C."/>
            <person name="Clutterbuck J."/>
            <person name="Kapitonov V."/>
            <person name="Jurka J."/>
            <person name="Scazzocchio C."/>
            <person name="Farman M.L."/>
            <person name="Butler J."/>
            <person name="Purcell S."/>
            <person name="Harris S."/>
            <person name="Braus G.H."/>
            <person name="Draht O."/>
            <person name="Busch S."/>
            <person name="D'Enfert C."/>
            <person name="Bouchier C."/>
            <person name="Goldman G.H."/>
            <person name="Bell-Pedersen D."/>
            <person name="Griffiths-Jones S."/>
            <person name="Doonan J.H."/>
            <person name="Yu J."/>
            <person name="Vienken K."/>
            <person name="Pain A."/>
            <person name="Freitag M."/>
            <person name="Selker E.U."/>
            <person name="Archer D.B."/>
            <person name="Penalva M.A."/>
            <person name="Oakley B.R."/>
            <person name="Momany M."/>
            <person name="Tanaka T."/>
            <person name="Kumagai T."/>
            <person name="Asai K."/>
            <person name="Machida M."/>
            <person name="Nierman W.C."/>
            <person name="Denning D.W."/>
            <person name="Caddick M.X."/>
            <person name="Hynes M."/>
            <person name="Paoletti M."/>
            <person name="Fischer R."/>
            <person name="Miller B.L."/>
            <person name="Dyer P.S."/>
            <person name="Sachs M.S."/>
            <person name="Osmani S.A."/>
            <person name="Birren B.W."/>
        </authorList>
    </citation>
    <scope>NUCLEOTIDE SEQUENCE [LARGE SCALE GENOMIC DNA]</scope>
    <source>
        <strain>FGSC A4 / ATCC 38163 / CBS 112.46 / NRRL 194 / M139</strain>
    </source>
</reference>
<reference key="3">
    <citation type="journal article" date="2009" name="Fungal Genet. Biol.">
        <title>The 2008 update of the Aspergillus nidulans genome annotation: a community effort.</title>
        <authorList>
            <person name="Wortman J.R."/>
            <person name="Gilsenan J.M."/>
            <person name="Joardar V."/>
            <person name="Deegan J."/>
            <person name="Clutterbuck J."/>
            <person name="Andersen M.R."/>
            <person name="Archer D."/>
            <person name="Bencina M."/>
            <person name="Braus G."/>
            <person name="Coutinho P."/>
            <person name="von Dohren H."/>
            <person name="Doonan J."/>
            <person name="Driessen A.J."/>
            <person name="Durek P."/>
            <person name="Espeso E."/>
            <person name="Fekete E."/>
            <person name="Flipphi M."/>
            <person name="Estrada C.G."/>
            <person name="Geysens S."/>
            <person name="Goldman G."/>
            <person name="de Groot P.W."/>
            <person name="Hansen K."/>
            <person name="Harris S.D."/>
            <person name="Heinekamp T."/>
            <person name="Helmstaedt K."/>
            <person name="Henrissat B."/>
            <person name="Hofmann G."/>
            <person name="Homan T."/>
            <person name="Horio T."/>
            <person name="Horiuchi H."/>
            <person name="James S."/>
            <person name="Jones M."/>
            <person name="Karaffa L."/>
            <person name="Karanyi Z."/>
            <person name="Kato M."/>
            <person name="Keller N."/>
            <person name="Kelly D.E."/>
            <person name="Kiel J.A."/>
            <person name="Kim J.M."/>
            <person name="van der Klei I.J."/>
            <person name="Klis F.M."/>
            <person name="Kovalchuk A."/>
            <person name="Krasevec N."/>
            <person name="Kubicek C.P."/>
            <person name="Liu B."/>
            <person name="Maccabe A."/>
            <person name="Meyer V."/>
            <person name="Mirabito P."/>
            <person name="Miskei M."/>
            <person name="Mos M."/>
            <person name="Mullins J."/>
            <person name="Nelson D.R."/>
            <person name="Nielsen J."/>
            <person name="Oakley B.R."/>
            <person name="Osmani S.A."/>
            <person name="Pakula T."/>
            <person name="Paszewski A."/>
            <person name="Paulsen I."/>
            <person name="Pilsyk S."/>
            <person name="Pocsi I."/>
            <person name="Punt P.J."/>
            <person name="Ram A.F."/>
            <person name="Ren Q."/>
            <person name="Robellet X."/>
            <person name="Robson G."/>
            <person name="Seiboth B."/>
            <person name="van Solingen P."/>
            <person name="Specht T."/>
            <person name="Sun J."/>
            <person name="Taheri-Talesh N."/>
            <person name="Takeshita N."/>
            <person name="Ussery D."/>
            <person name="vanKuyk P.A."/>
            <person name="Visser H."/>
            <person name="van de Vondervoort P.J."/>
            <person name="de Vries R.P."/>
            <person name="Walton J."/>
            <person name="Xiang X."/>
            <person name="Xiong Y."/>
            <person name="Zeng A.P."/>
            <person name="Brandt B.W."/>
            <person name="Cornell M.J."/>
            <person name="van den Hondel C.A."/>
            <person name="Visser J."/>
            <person name="Oliver S.G."/>
            <person name="Turner G."/>
        </authorList>
    </citation>
    <scope>GENOME REANNOTATION</scope>
    <source>
        <strain>FGSC A4 / ATCC 38163 / CBS 112.46 / NRRL 194 / M139</strain>
    </source>
</reference>
<reference key="4">
    <citation type="journal article" date="1994" name="EMBO J.">
        <title>The Aspergillus nidulans CREA protein mediates glucose repression of the ethanol regulon at various levels through competition with the ALCR-specific transactivator.</title>
        <authorList>
            <person name="Mathieu M."/>
            <person name="Felenbok B."/>
        </authorList>
    </citation>
    <scope>CHARACTERIZATION</scope>
</reference>
<reference key="5">
    <citation type="journal article" date="2001" name="Mol. Microbiol.">
        <title>Carbon catabolite repression in Aspergillus nidulans involves deubiquitination.</title>
        <authorList>
            <person name="Lockington R.A."/>
            <person name="Kelly J.M."/>
        </authorList>
    </citation>
    <scope>FUNCTION</scope>
</reference>
<reference key="6">
    <citation type="journal article" date="2008" name="Curr. Genet.">
        <title>The interaction of induction, repression and starvation in the regulation of extracellular proteases in Aspergillus nidulans: evidence for a role for CreA in the response to carbon starvation.</title>
        <authorList>
            <person name="Katz M.E."/>
            <person name="Bernardo S.M."/>
            <person name="Cheetham B.F."/>
        </authorList>
    </citation>
    <scope>FUNCTION</scope>
</reference>
<reference key="7">
    <citation type="journal article" date="2008" name="Fungal Genet. Biol.">
        <title>CreA-mediated repression in Aspergillus nidulans does not require transcriptional auto-regulation, regulated intracellular localisation or degradation of CreA.</title>
        <authorList>
            <person name="Roy P."/>
            <person name="Lockington R.A."/>
            <person name="Kelly J.M."/>
        </authorList>
    </citation>
    <scope>FUNCTION</scope>
    <scope>SUBCELLULAR LOCATION</scope>
</reference>
<reference key="8">
    <citation type="thesis" date="2008" institute="University of Adelaide" country="Australia">
        <title>Identifying target proteins of the CreB deubiquitination enzyme in the fungus Aspergillus nidulans.</title>
        <authorList>
            <person name="Kamlangdee N."/>
        </authorList>
    </citation>
    <scope>UBIQUITINATION</scope>
    <scope>INTERACTION WITH CREB</scope>
    <scope>DEUBIQUITINATION BY CREB</scope>
</reference>
<reference key="9">
    <citation type="journal article" date="2014" name="BMC Genomics">
        <title>Elucidating how the saprophytic fungus Aspergillus nidulans uses the plant polyester suberin as carbon source.</title>
        <authorList>
            <person name="Martins I."/>
            <person name="Hartmann D.O."/>
            <person name="Alves P.C."/>
            <person name="Martins C."/>
            <person name="Garcia H."/>
            <person name="Leclercq C.C."/>
            <person name="Ferreira R."/>
            <person name="He J."/>
            <person name="Renaut J."/>
            <person name="Becker J.D."/>
            <person name="Silva Pereira C."/>
        </authorList>
    </citation>
    <scope>INDUCTION</scope>
</reference>
<feature type="chain" id="PRO_0000046875" description="DNA-binding protein creA">
    <location>
        <begin position="1"/>
        <end position="416"/>
    </location>
</feature>
<feature type="zinc finger region" description="C2H2-type 1" evidence="2">
    <location>
        <begin position="64"/>
        <end position="86"/>
    </location>
</feature>
<feature type="zinc finger region" description="C2H2-type 2" evidence="2">
    <location>
        <begin position="92"/>
        <end position="116"/>
    </location>
</feature>
<feature type="region of interest" description="Disordered" evidence="3">
    <location>
        <begin position="1"/>
        <end position="21"/>
    </location>
</feature>
<feature type="region of interest" description="Disordered" evidence="3">
    <location>
        <begin position="145"/>
        <end position="179"/>
    </location>
</feature>
<feature type="region of interest" description="Disordered" evidence="3">
    <location>
        <begin position="220"/>
        <end position="321"/>
    </location>
</feature>
<feature type="region of interest" description="Disordered" evidence="3">
    <location>
        <begin position="340"/>
        <end position="368"/>
    </location>
</feature>
<feature type="region of interest" description="Disordered" evidence="3">
    <location>
        <begin position="395"/>
        <end position="416"/>
    </location>
</feature>
<feature type="compositionally biased region" description="Basic residues" evidence="3">
    <location>
        <begin position="230"/>
        <end position="242"/>
    </location>
</feature>
<feature type="compositionally biased region" description="Low complexity" evidence="3">
    <location>
        <begin position="279"/>
        <end position="293"/>
    </location>
</feature>
<feature type="compositionally biased region" description="Low complexity" evidence="3">
    <location>
        <begin position="395"/>
        <end position="409"/>
    </location>
</feature>
<evidence type="ECO:0000250" key="1"/>
<evidence type="ECO:0000255" key="2">
    <source>
        <dbReference type="PROSITE-ProRule" id="PRU00042"/>
    </source>
</evidence>
<evidence type="ECO:0000256" key="3">
    <source>
        <dbReference type="SAM" id="MobiDB-lite"/>
    </source>
</evidence>
<evidence type="ECO:0000269" key="4">
    <source>
    </source>
</evidence>
<evidence type="ECO:0000269" key="5">
    <source>
    </source>
</evidence>
<evidence type="ECO:0000269" key="6">
    <source>
    </source>
</evidence>
<evidence type="ECO:0000269" key="7">
    <source>
    </source>
</evidence>
<evidence type="ECO:0000269" key="8">
    <source ref="8"/>
</evidence>
<evidence type="ECO:0000305" key="9"/>
<accession>Q01981</accession>
<accession>C8V211</accession>
<accession>Q5AZT5</accession>
<gene>
    <name type="primary">creA</name>
    <name type="ORF">AN6195</name>
</gene>
<proteinExistence type="evidence at protein level"/>
<sequence>MPQPGSSVDFSNLLNPQNNTAIPAEVSNATASATMASGASLLPPMVKGARPAAEEARQDLPRPYKCPLCERAFHRLEHQTRHIRTHTGEKPHACQFPGCSKRFSRSDELTRHSRIHNNPNSRRGNKAQHLAAAAAAAAANQDGSAMANNAGSMMPPPSKPITRSAPVSQVGSPDISPPHSFSNYANHMRSNLSPYSRTSERASSGMDINLLATAASQVERDESFGFRSGQRSHHMYGPRHGSRGLPSLSAYAISHSMSRSHSHEDEDSYASHRVKRSRPNSPNSTAPSSPTFSHDSLSPTPDHTPLATPAHSPRLKPLSPSELHLPSIRHLSLHHTPALAPMEPQAEGPNYYNPNQPHVGPSISDIMSRPEGAQRKLPIPQVPKVAVQDMLNPSGFTSVSSSTANSVAGGDLAERF</sequence>
<keyword id="KW-0238">DNA-binding</keyword>
<keyword id="KW-0479">Metal-binding</keyword>
<keyword id="KW-0539">Nucleus</keyword>
<keyword id="KW-1185">Reference proteome</keyword>
<keyword id="KW-0677">Repeat</keyword>
<keyword id="KW-0678">Repressor</keyword>
<keyword id="KW-0804">Transcription</keyword>
<keyword id="KW-0805">Transcription regulation</keyword>
<keyword id="KW-0832">Ubl conjugation</keyword>
<keyword id="KW-0862">Zinc</keyword>
<keyword id="KW-0863">Zinc-finger</keyword>
<name>CREA_EMENI</name>